<proteinExistence type="evidence at transcript level"/>
<accession>B1H369</accession>
<evidence type="ECO:0000250" key="1">
    <source>
        <dbReference type="UniProtKB" id="Q9BY41"/>
    </source>
</evidence>
<evidence type="ECO:0000305" key="2"/>
<keyword id="KW-0156">Chromatin regulator</keyword>
<keyword id="KW-0158">Chromosome</keyword>
<keyword id="KW-0963">Cytoplasm</keyword>
<keyword id="KW-0378">Hydrolase</keyword>
<keyword id="KW-0479">Metal-binding</keyword>
<keyword id="KW-0539">Nucleus</keyword>
<keyword id="KW-1185">Reference proteome</keyword>
<keyword id="KW-0678">Repressor</keyword>
<keyword id="KW-0804">Transcription</keyword>
<keyword id="KW-0805">Transcription regulation</keyword>
<reference key="1">
    <citation type="submission" date="2008-03" db="EMBL/GenBank/DDBJ databases">
        <authorList>
            <consortium name="NIH - Xenopus Gene Collection (XGC) project"/>
        </authorList>
    </citation>
    <scope>NUCLEOTIDE SEQUENCE [LARGE SCALE MRNA]</scope>
    <source>
        <tissue>Embryo</tissue>
    </source>
</reference>
<feature type="chain" id="PRO_0000389511" description="Histone deacetylase 8">
    <location>
        <begin position="1"/>
        <end position="369"/>
    </location>
</feature>
<feature type="region of interest" description="Histone deacetylase">
    <location>
        <begin position="5"/>
        <end position="316"/>
    </location>
</feature>
<feature type="active site" description="Proton acceptor" evidence="1">
    <location>
        <position position="135"/>
    </location>
</feature>
<feature type="binding site" evidence="1">
    <location>
        <position position="93"/>
    </location>
    <ligand>
        <name>substrate</name>
    </ligand>
</feature>
<feature type="binding site" evidence="1">
    <location>
        <position position="143"/>
    </location>
    <ligand>
        <name>substrate</name>
    </ligand>
</feature>
<feature type="binding site" evidence="1">
    <location>
        <position position="170"/>
    </location>
    <ligand>
        <name>a divalent metal cation</name>
        <dbReference type="ChEBI" id="CHEBI:60240"/>
    </ligand>
</feature>
<feature type="binding site" evidence="1">
    <location>
        <position position="172"/>
    </location>
    <ligand>
        <name>a divalent metal cation</name>
        <dbReference type="ChEBI" id="CHEBI:60240"/>
    </ligand>
</feature>
<feature type="binding site" evidence="1">
    <location>
        <position position="259"/>
    </location>
    <ligand>
        <name>a divalent metal cation</name>
        <dbReference type="ChEBI" id="CHEBI:60240"/>
    </ligand>
</feature>
<feature type="binding site" evidence="1">
    <location>
        <position position="298"/>
    </location>
    <ligand>
        <name>substrate</name>
    </ligand>
</feature>
<organism>
    <name type="scientific">Xenopus tropicalis</name>
    <name type="common">Western clawed frog</name>
    <name type="synonym">Silurana tropicalis</name>
    <dbReference type="NCBI Taxonomy" id="8364"/>
    <lineage>
        <taxon>Eukaryota</taxon>
        <taxon>Metazoa</taxon>
        <taxon>Chordata</taxon>
        <taxon>Craniata</taxon>
        <taxon>Vertebrata</taxon>
        <taxon>Euteleostomi</taxon>
        <taxon>Amphibia</taxon>
        <taxon>Batrachia</taxon>
        <taxon>Anura</taxon>
        <taxon>Pipoidea</taxon>
        <taxon>Pipidae</taxon>
        <taxon>Xenopodinae</taxon>
        <taxon>Xenopus</taxon>
        <taxon>Silurana</taxon>
    </lineage>
</organism>
<name>HDAC8_XENTR</name>
<protein>
    <recommendedName>
        <fullName>Histone deacetylase 8</fullName>
        <shortName>HD8</shortName>
        <ecNumber evidence="1">3.5.1.98</ecNumber>
    </recommendedName>
    <alternativeName>
        <fullName evidence="2">Protein deacetylase HDAC8</fullName>
        <ecNumber evidence="1">3.5.1.-</ecNumber>
    </alternativeName>
    <alternativeName>
        <fullName evidence="2">Protein decrotonylase HDAC8</fullName>
        <ecNumber evidence="1">3.5.1.-</ecNumber>
    </alternativeName>
</protein>
<dbReference type="EC" id="3.5.1.98" evidence="1"/>
<dbReference type="EC" id="3.5.1.-" evidence="1"/>
<dbReference type="EMBL" id="BC161282">
    <property type="protein sequence ID" value="AAI61282.1"/>
    <property type="molecule type" value="mRNA"/>
</dbReference>
<dbReference type="RefSeq" id="NP_001120462.1">
    <property type="nucleotide sequence ID" value="NM_001126990.1"/>
</dbReference>
<dbReference type="SMR" id="B1H369"/>
<dbReference type="FunCoup" id="B1H369">
    <property type="interactions" value="1877"/>
</dbReference>
<dbReference type="STRING" id="8364.ENSXETP00000048414"/>
<dbReference type="PaxDb" id="8364-ENSXETP00000044353"/>
<dbReference type="GeneID" id="100145561"/>
<dbReference type="KEGG" id="xtr:100145561"/>
<dbReference type="AGR" id="Xenbase:XB-GENE-5863426"/>
<dbReference type="CTD" id="55869"/>
<dbReference type="Xenbase" id="XB-GENE-5863426">
    <property type="gene designation" value="hdac8"/>
</dbReference>
<dbReference type="eggNOG" id="KOG1342">
    <property type="taxonomic scope" value="Eukaryota"/>
</dbReference>
<dbReference type="HOGENOM" id="CLU_007727_7_6_1"/>
<dbReference type="InParanoid" id="B1H369"/>
<dbReference type="OMA" id="CFWHSTG"/>
<dbReference type="OrthoDB" id="73273at2759"/>
<dbReference type="PhylomeDB" id="B1H369"/>
<dbReference type="TreeFam" id="TF106175"/>
<dbReference type="Reactome" id="R-XTR-350054">
    <property type="pathway name" value="Notch-HLH transcription pathway"/>
</dbReference>
<dbReference type="Proteomes" id="UP000008143">
    <property type="component" value="Chromosome 8"/>
</dbReference>
<dbReference type="Bgee" id="ENSXETG00000020527">
    <property type="expression patterns" value="Expressed in 4-cell stage embryo and 13 other cell types or tissues"/>
</dbReference>
<dbReference type="ExpressionAtlas" id="B1H369">
    <property type="expression patterns" value="differential"/>
</dbReference>
<dbReference type="GO" id="GO:0005694">
    <property type="term" value="C:chromosome"/>
    <property type="evidence" value="ECO:0007669"/>
    <property type="project" value="UniProtKB-SubCell"/>
</dbReference>
<dbReference type="GO" id="GO:0005737">
    <property type="term" value="C:cytoplasm"/>
    <property type="evidence" value="ECO:0007669"/>
    <property type="project" value="UniProtKB-SubCell"/>
</dbReference>
<dbReference type="GO" id="GO:0005634">
    <property type="term" value="C:nucleus"/>
    <property type="evidence" value="ECO:0007669"/>
    <property type="project" value="UniProtKB-SubCell"/>
</dbReference>
<dbReference type="GO" id="GO:0004407">
    <property type="term" value="F:histone deacetylase activity"/>
    <property type="evidence" value="ECO:0000250"/>
    <property type="project" value="UniProtKB"/>
</dbReference>
<dbReference type="GO" id="GO:0141221">
    <property type="term" value="F:histone deacetylase activity, hydrolytic mechanism"/>
    <property type="evidence" value="ECO:0007669"/>
    <property type="project" value="UniProtKB-EC"/>
</dbReference>
<dbReference type="GO" id="GO:0160009">
    <property type="term" value="F:histone decrotonylase activity"/>
    <property type="evidence" value="ECO:0000250"/>
    <property type="project" value="UniProtKB"/>
</dbReference>
<dbReference type="GO" id="GO:0046872">
    <property type="term" value="F:metal ion binding"/>
    <property type="evidence" value="ECO:0007669"/>
    <property type="project" value="UniProtKB-KW"/>
</dbReference>
<dbReference type="CDD" id="cd10000">
    <property type="entry name" value="HDAC8"/>
    <property type="match status" value="1"/>
</dbReference>
<dbReference type="FunFam" id="3.40.800.20:FF:000006">
    <property type="entry name" value="Histone deacetylase 8"/>
    <property type="match status" value="1"/>
</dbReference>
<dbReference type="Gene3D" id="3.40.800.20">
    <property type="entry name" value="Histone deacetylase domain"/>
    <property type="match status" value="1"/>
</dbReference>
<dbReference type="InterPro" id="IPR050284">
    <property type="entry name" value="HDAC_PDAC"/>
</dbReference>
<dbReference type="InterPro" id="IPR000286">
    <property type="entry name" value="His_deacetylse"/>
</dbReference>
<dbReference type="InterPro" id="IPR003084">
    <property type="entry name" value="His_deacetylse_1"/>
</dbReference>
<dbReference type="InterPro" id="IPR023801">
    <property type="entry name" value="His_deacetylse_dom"/>
</dbReference>
<dbReference type="InterPro" id="IPR037138">
    <property type="entry name" value="His_deacetylse_dom_sf"/>
</dbReference>
<dbReference type="InterPro" id="IPR023696">
    <property type="entry name" value="Ureohydrolase_dom_sf"/>
</dbReference>
<dbReference type="PANTHER" id="PTHR10625:SF14">
    <property type="entry name" value="HISTONE DEACETYLASE 8"/>
    <property type="match status" value="1"/>
</dbReference>
<dbReference type="PANTHER" id="PTHR10625">
    <property type="entry name" value="HISTONE DEACETYLASE HDAC1-RELATED"/>
    <property type="match status" value="1"/>
</dbReference>
<dbReference type="Pfam" id="PF00850">
    <property type="entry name" value="Hist_deacetyl"/>
    <property type="match status" value="1"/>
</dbReference>
<dbReference type="PIRSF" id="PIRSF037913">
    <property type="entry name" value="His_deacetylse_1"/>
    <property type="match status" value="1"/>
</dbReference>
<dbReference type="PRINTS" id="PR01270">
    <property type="entry name" value="HDASUPER"/>
</dbReference>
<dbReference type="PRINTS" id="PR01271">
    <property type="entry name" value="HISDACETLASE"/>
</dbReference>
<dbReference type="SUPFAM" id="SSF52768">
    <property type="entry name" value="Arginase/deacetylase"/>
    <property type="match status" value="1"/>
</dbReference>
<comment type="function">
    <text evidence="1">Histone deacetylase that catalyzes the deacetylation of lysine residues on the N-terminal part of the core histones (H2A, H2B, H3 and H4). Histone deacetylation gives a tag for epigenetic repression and plays an important role in transcriptional regulation, cell cycle progression and developmental events. Histone deacetylases act via the formation of large multiprotein complexes. Also involved in the deacetylation of non-histone proteins. In addition to protein deacetylase activity, also has protein-lysine deacylase activity: acts as a protein decrotonylase by mediating decrotonylation ((2E)-butenoyl) of histones.</text>
</comment>
<comment type="catalytic activity">
    <reaction evidence="1">
        <text>N(6)-acetyl-L-lysyl-[histone] + H2O = L-lysyl-[histone] + acetate</text>
        <dbReference type="Rhea" id="RHEA:58196"/>
        <dbReference type="Rhea" id="RHEA-COMP:9845"/>
        <dbReference type="Rhea" id="RHEA-COMP:11338"/>
        <dbReference type="ChEBI" id="CHEBI:15377"/>
        <dbReference type="ChEBI" id="CHEBI:29969"/>
        <dbReference type="ChEBI" id="CHEBI:30089"/>
        <dbReference type="ChEBI" id="CHEBI:61930"/>
        <dbReference type="EC" id="3.5.1.98"/>
    </reaction>
    <physiologicalReaction direction="left-to-right" evidence="1">
        <dbReference type="Rhea" id="RHEA:58197"/>
    </physiologicalReaction>
</comment>
<comment type="catalytic activity">
    <reaction evidence="1">
        <text>N(6)-acetyl-L-lysyl-[protein] + H2O = L-lysyl-[protein] + acetate</text>
        <dbReference type="Rhea" id="RHEA:58108"/>
        <dbReference type="Rhea" id="RHEA-COMP:9752"/>
        <dbReference type="Rhea" id="RHEA-COMP:10731"/>
        <dbReference type="ChEBI" id="CHEBI:15377"/>
        <dbReference type="ChEBI" id="CHEBI:29969"/>
        <dbReference type="ChEBI" id="CHEBI:30089"/>
        <dbReference type="ChEBI" id="CHEBI:61930"/>
    </reaction>
    <physiologicalReaction direction="left-to-right" evidence="1">
        <dbReference type="Rhea" id="RHEA:58109"/>
    </physiologicalReaction>
</comment>
<comment type="catalytic activity">
    <reaction evidence="1">
        <text>N(6)-(2E)-butenoyl-L-lysyl-[protein] + H2O = (2E)-2-butenoate + L-lysyl-[protein]</text>
        <dbReference type="Rhea" id="RHEA:69172"/>
        <dbReference type="Rhea" id="RHEA-COMP:9752"/>
        <dbReference type="Rhea" id="RHEA-COMP:13707"/>
        <dbReference type="ChEBI" id="CHEBI:15377"/>
        <dbReference type="ChEBI" id="CHEBI:29969"/>
        <dbReference type="ChEBI" id="CHEBI:35899"/>
        <dbReference type="ChEBI" id="CHEBI:137954"/>
    </reaction>
    <physiologicalReaction direction="left-to-right" evidence="1">
        <dbReference type="Rhea" id="RHEA:69173"/>
    </physiologicalReaction>
</comment>
<comment type="cofactor">
    <cofactor evidence="1">
        <name>a divalent metal cation</name>
        <dbReference type="ChEBI" id="CHEBI:60240"/>
    </cofactor>
    <text evidence="1">Binds 1 divalent metal cation per subunit.</text>
</comment>
<comment type="activity regulation">
    <text evidence="1">Its activity is inhibited by trichostatin A (TSA) and butyrate, 2 well known histone deacetylase inhibitors.</text>
</comment>
<comment type="subcellular location">
    <subcellularLocation>
        <location evidence="1">Nucleus</location>
    </subcellularLocation>
    <subcellularLocation>
        <location evidence="1">Chromosome</location>
    </subcellularLocation>
    <subcellularLocation>
        <location evidence="1">Cytoplasm</location>
    </subcellularLocation>
    <text evidence="1">Excluded from the nucleoli. Found in the cytoplasm of cells showing smooth muscle differentiation.</text>
</comment>
<comment type="similarity">
    <text evidence="2">Belongs to the histone deacetylase family. HD type 1 subfamily.</text>
</comment>
<gene>
    <name type="primary">hdac8</name>
</gene>
<sequence>MEESLLPVYIHSAEYVELCDNVQSKVPRRASMVHSLIEAYGLLKEMRVVKPKVASMEEMAAFHTDSYLQHLHKVSEEGDNDDPETLEYGLGYDCPITEGIYDYAAAVGGATLTAAEQLMAGKTRIAINWPGGWHHAKKDEASGFCYLNDAVLGILKLREKFDRVLYVDMDLHHGDGVEDAFSFTSKVMTVSLHKFSPGFFPGTGDVSDIGLGKGRYYSVNVPLQDGIQDEKYYQICEGVLKEVFTTFNPEAVVLQLGADTIAGDPMCSFNMTPQGIGKCLKYVLQWQLPTLILGGGGYHLPNTARCWTYLTALIVGRTLSSEIPDHEFFTEYGPDYVLEVTPSCRPDRNDSQKVQEILQSIKGHLKQVV</sequence>